<reference key="1">
    <citation type="journal article" date="2006" name="J. Bacteriol.">
        <title>The genome of the obligately intracellular bacterium Ehrlichia canis reveals themes of complex membrane structure and immune evasion strategies.</title>
        <authorList>
            <person name="Mavromatis K."/>
            <person name="Doyle C.K."/>
            <person name="Lykidis A."/>
            <person name="Ivanova N."/>
            <person name="Francino M.P."/>
            <person name="Chain P."/>
            <person name="Shin M."/>
            <person name="Malfatti S."/>
            <person name="Larimer F."/>
            <person name="Copeland A."/>
            <person name="Detter J.C."/>
            <person name="Land M."/>
            <person name="Richardson P.M."/>
            <person name="Yu X.J."/>
            <person name="Walker D.H."/>
            <person name="McBride J.W."/>
            <person name="Kyrpides N.C."/>
        </authorList>
    </citation>
    <scope>NUCLEOTIDE SEQUENCE [LARGE SCALE GENOMIC DNA]</scope>
    <source>
        <strain>Jake</strain>
    </source>
</reference>
<protein>
    <recommendedName>
        <fullName evidence="1">tRNA modification GTPase MnmE</fullName>
        <ecNumber evidence="1">3.6.-.-</ecNumber>
    </recommendedName>
</protein>
<evidence type="ECO:0000255" key="1">
    <source>
        <dbReference type="HAMAP-Rule" id="MF_00379"/>
    </source>
</evidence>
<organism>
    <name type="scientific">Ehrlichia canis (strain Jake)</name>
    <dbReference type="NCBI Taxonomy" id="269484"/>
    <lineage>
        <taxon>Bacteria</taxon>
        <taxon>Pseudomonadati</taxon>
        <taxon>Pseudomonadota</taxon>
        <taxon>Alphaproteobacteria</taxon>
        <taxon>Rickettsiales</taxon>
        <taxon>Anaplasmataceae</taxon>
        <taxon>Ehrlichia</taxon>
    </lineage>
</organism>
<dbReference type="EC" id="3.6.-.-" evidence="1"/>
<dbReference type="EMBL" id="CP000107">
    <property type="protein sequence ID" value="AAZ68083.1"/>
    <property type="molecule type" value="Genomic_DNA"/>
</dbReference>
<dbReference type="SMR" id="Q3YT72"/>
<dbReference type="FunCoup" id="Q3YT72">
    <property type="interactions" value="325"/>
</dbReference>
<dbReference type="STRING" id="269484.Ecaj_0032"/>
<dbReference type="KEGG" id="ecn:Ecaj_0032"/>
<dbReference type="eggNOG" id="COG0486">
    <property type="taxonomic scope" value="Bacteria"/>
</dbReference>
<dbReference type="HOGENOM" id="CLU_019624_3_1_5"/>
<dbReference type="InParanoid" id="Q3YT72"/>
<dbReference type="Proteomes" id="UP000000435">
    <property type="component" value="Chromosome"/>
</dbReference>
<dbReference type="GO" id="GO:0005737">
    <property type="term" value="C:cytoplasm"/>
    <property type="evidence" value="ECO:0007669"/>
    <property type="project" value="UniProtKB-SubCell"/>
</dbReference>
<dbReference type="GO" id="GO:0005525">
    <property type="term" value="F:GTP binding"/>
    <property type="evidence" value="ECO:0007669"/>
    <property type="project" value="UniProtKB-UniRule"/>
</dbReference>
<dbReference type="GO" id="GO:0003924">
    <property type="term" value="F:GTPase activity"/>
    <property type="evidence" value="ECO:0007669"/>
    <property type="project" value="UniProtKB-UniRule"/>
</dbReference>
<dbReference type="GO" id="GO:0046872">
    <property type="term" value="F:metal ion binding"/>
    <property type="evidence" value="ECO:0007669"/>
    <property type="project" value="UniProtKB-KW"/>
</dbReference>
<dbReference type="GO" id="GO:0030488">
    <property type="term" value="P:tRNA methylation"/>
    <property type="evidence" value="ECO:0007669"/>
    <property type="project" value="TreeGrafter"/>
</dbReference>
<dbReference type="GO" id="GO:0002098">
    <property type="term" value="P:tRNA wobble uridine modification"/>
    <property type="evidence" value="ECO:0007669"/>
    <property type="project" value="TreeGrafter"/>
</dbReference>
<dbReference type="CDD" id="cd04164">
    <property type="entry name" value="trmE"/>
    <property type="match status" value="1"/>
</dbReference>
<dbReference type="CDD" id="cd14858">
    <property type="entry name" value="TrmE_N"/>
    <property type="match status" value="1"/>
</dbReference>
<dbReference type="Gene3D" id="3.40.50.300">
    <property type="entry name" value="P-loop containing nucleotide triphosphate hydrolases"/>
    <property type="match status" value="1"/>
</dbReference>
<dbReference type="Gene3D" id="3.30.1360.120">
    <property type="entry name" value="Probable tRNA modification gtpase trme, domain 1"/>
    <property type="match status" value="1"/>
</dbReference>
<dbReference type="Gene3D" id="1.20.120.430">
    <property type="entry name" value="tRNA modification GTPase MnmE domain 2"/>
    <property type="match status" value="1"/>
</dbReference>
<dbReference type="HAMAP" id="MF_00379">
    <property type="entry name" value="GTPase_MnmE"/>
    <property type="match status" value="1"/>
</dbReference>
<dbReference type="InterPro" id="IPR031168">
    <property type="entry name" value="G_TrmE"/>
</dbReference>
<dbReference type="InterPro" id="IPR006073">
    <property type="entry name" value="GTP-bd"/>
</dbReference>
<dbReference type="InterPro" id="IPR018948">
    <property type="entry name" value="GTP-bd_TrmE_N"/>
</dbReference>
<dbReference type="InterPro" id="IPR004520">
    <property type="entry name" value="GTPase_MnmE"/>
</dbReference>
<dbReference type="InterPro" id="IPR027368">
    <property type="entry name" value="MnmE_dom2"/>
</dbReference>
<dbReference type="InterPro" id="IPR025867">
    <property type="entry name" value="MnmE_helical"/>
</dbReference>
<dbReference type="InterPro" id="IPR027417">
    <property type="entry name" value="P-loop_NTPase"/>
</dbReference>
<dbReference type="InterPro" id="IPR005225">
    <property type="entry name" value="Small_GTP-bd"/>
</dbReference>
<dbReference type="InterPro" id="IPR027266">
    <property type="entry name" value="TrmE/GcvT_dom1"/>
</dbReference>
<dbReference type="NCBIfam" id="TIGR00450">
    <property type="entry name" value="mnmE_trmE_thdF"/>
    <property type="match status" value="1"/>
</dbReference>
<dbReference type="NCBIfam" id="NF003661">
    <property type="entry name" value="PRK05291.1-3"/>
    <property type="match status" value="1"/>
</dbReference>
<dbReference type="NCBIfam" id="TIGR00231">
    <property type="entry name" value="small_GTP"/>
    <property type="match status" value="1"/>
</dbReference>
<dbReference type="PANTHER" id="PTHR42714">
    <property type="entry name" value="TRNA MODIFICATION GTPASE GTPBP3"/>
    <property type="match status" value="1"/>
</dbReference>
<dbReference type="PANTHER" id="PTHR42714:SF2">
    <property type="entry name" value="TRNA MODIFICATION GTPASE GTPBP3, MITOCHONDRIAL"/>
    <property type="match status" value="1"/>
</dbReference>
<dbReference type="Pfam" id="PF01926">
    <property type="entry name" value="MMR_HSR1"/>
    <property type="match status" value="1"/>
</dbReference>
<dbReference type="Pfam" id="PF12631">
    <property type="entry name" value="MnmE_helical"/>
    <property type="match status" value="1"/>
</dbReference>
<dbReference type="Pfam" id="PF10396">
    <property type="entry name" value="TrmE_N"/>
    <property type="match status" value="1"/>
</dbReference>
<dbReference type="SUPFAM" id="SSF52540">
    <property type="entry name" value="P-loop containing nucleoside triphosphate hydrolases"/>
    <property type="match status" value="1"/>
</dbReference>
<dbReference type="SUPFAM" id="SSF116878">
    <property type="entry name" value="TrmE connector domain"/>
    <property type="match status" value="1"/>
</dbReference>
<dbReference type="PROSITE" id="PS51709">
    <property type="entry name" value="G_TRME"/>
    <property type="match status" value="1"/>
</dbReference>
<comment type="function">
    <text evidence="1">Exhibits a very high intrinsic GTPase hydrolysis rate. Involved in the addition of a carboxymethylaminomethyl (cmnm) group at the wobble position (U34) of certain tRNAs, forming tRNA-cmnm(5)s(2)U34.</text>
</comment>
<comment type="cofactor">
    <cofactor evidence="1">
        <name>K(+)</name>
        <dbReference type="ChEBI" id="CHEBI:29103"/>
    </cofactor>
    <text evidence="1">Binds 1 potassium ion per subunit.</text>
</comment>
<comment type="subunit">
    <text evidence="1">Homodimer. Heterotetramer of two MnmE and two MnmG subunits.</text>
</comment>
<comment type="subcellular location">
    <subcellularLocation>
        <location evidence="1">Cytoplasm</location>
    </subcellularLocation>
</comment>
<comment type="similarity">
    <text evidence="1">Belongs to the TRAFAC class TrmE-Era-EngA-EngB-Septin-like GTPase superfamily. TrmE GTPase family.</text>
</comment>
<accession>Q3YT72</accession>
<proteinExistence type="inferred from homology"/>
<sequence length="441" mass="49266">MIMSTIFALCTPWGKSGVAVIRVSGKDAAKAFLHFGISSSIKPRTATFAHLYNSKGEIIDEVIIVYFVAPSSFTGEDVVEFHTHGSLAVIKMILAELGKIFVPAGPGEFSLRAFLNNKVDLTRAEAIVDLINSETEMQAKQAIRQMSGALEKLYQSWRQQLIDILSNIEAYIDFPEEVNSAALANIGYLLNNLQESLECHLNDDRKGERLRQGIYIAIVGEPNSGKSTLFNHLAKRDIAIVSEYAGTTRDTLEAHIDVAGYPIVIIDTAGIRDSADLIEQEGIRRAKLKAENADFKIVMLPYEKRNVFNNEIMNLIDEKSICVLSKADNITEHELISIFNFSFVPISVCCNRGIEILLNLIKQRVEKDFQFCSTHPFITSERQRLHIQNTLNIVKNMDLELPMEIVAEDLRLSVRELGKVVGVISDEDILDNVFGKFCIGK</sequence>
<name>MNME_EHRCJ</name>
<feature type="chain" id="PRO_0000345777" description="tRNA modification GTPase MnmE">
    <location>
        <begin position="1"/>
        <end position="441"/>
    </location>
</feature>
<feature type="domain" description="TrmE-type G">
    <location>
        <begin position="213"/>
        <end position="366"/>
    </location>
</feature>
<feature type="binding site" evidence="1">
    <location>
        <position position="22"/>
    </location>
    <ligand>
        <name>(6S)-5-formyl-5,6,7,8-tetrahydrofolate</name>
        <dbReference type="ChEBI" id="CHEBI:57457"/>
    </ligand>
</feature>
<feature type="binding site" evidence="1">
    <location>
        <position position="80"/>
    </location>
    <ligand>
        <name>(6S)-5-formyl-5,6,7,8-tetrahydrofolate</name>
        <dbReference type="ChEBI" id="CHEBI:57457"/>
    </ligand>
</feature>
<feature type="binding site" evidence="1">
    <location>
        <position position="118"/>
    </location>
    <ligand>
        <name>(6S)-5-formyl-5,6,7,8-tetrahydrofolate</name>
        <dbReference type="ChEBI" id="CHEBI:57457"/>
    </ligand>
</feature>
<feature type="binding site" evidence="1">
    <location>
        <begin position="223"/>
        <end position="228"/>
    </location>
    <ligand>
        <name>GTP</name>
        <dbReference type="ChEBI" id="CHEBI:37565"/>
    </ligand>
</feature>
<feature type="binding site" evidence="1">
    <location>
        <position position="227"/>
    </location>
    <ligand>
        <name>Mg(2+)</name>
        <dbReference type="ChEBI" id="CHEBI:18420"/>
    </ligand>
</feature>
<feature type="binding site" evidence="1">
    <location>
        <begin position="242"/>
        <end position="248"/>
    </location>
    <ligand>
        <name>GTP</name>
        <dbReference type="ChEBI" id="CHEBI:37565"/>
    </ligand>
</feature>
<feature type="binding site" evidence="1">
    <location>
        <position position="248"/>
    </location>
    <ligand>
        <name>Mg(2+)</name>
        <dbReference type="ChEBI" id="CHEBI:18420"/>
    </ligand>
</feature>
<feature type="binding site" evidence="1">
    <location>
        <begin position="267"/>
        <end position="270"/>
    </location>
    <ligand>
        <name>GTP</name>
        <dbReference type="ChEBI" id="CHEBI:37565"/>
    </ligand>
</feature>
<feature type="binding site" evidence="1">
    <location>
        <position position="441"/>
    </location>
    <ligand>
        <name>(6S)-5-formyl-5,6,7,8-tetrahydrofolate</name>
        <dbReference type="ChEBI" id="CHEBI:57457"/>
    </ligand>
</feature>
<keyword id="KW-0963">Cytoplasm</keyword>
<keyword id="KW-0342">GTP-binding</keyword>
<keyword id="KW-0378">Hydrolase</keyword>
<keyword id="KW-0460">Magnesium</keyword>
<keyword id="KW-0479">Metal-binding</keyword>
<keyword id="KW-0547">Nucleotide-binding</keyword>
<keyword id="KW-0630">Potassium</keyword>
<keyword id="KW-0819">tRNA processing</keyword>
<gene>
    <name evidence="1" type="primary">mnmE</name>
    <name evidence="1" type="synonym">trmE</name>
    <name type="ordered locus">Ecaj_0032</name>
</gene>